<organism>
    <name type="scientific">Salmonella enteritidis PT4 (strain P125109)</name>
    <dbReference type="NCBI Taxonomy" id="550537"/>
    <lineage>
        <taxon>Bacteria</taxon>
        <taxon>Pseudomonadati</taxon>
        <taxon>Pseudomonadota</taxon>
        <taxon>Gammaproteobacteria</taxon>
        <taxon>Enterobacterales</taxon>
        <taxon>Enterobacteriaceae</taxon>
        <taxon>Salmonella</taxon>
    </lineage>
</organism>
<proteinExistence type="inferred from homology"/>
<reference key="1">
    <citation type="journal article" date="2008" name="Genome Res.">
        <title>Comparative genome analysis of Salmonella enteritidis PT4 and Salmonella gallinarum 287/91 provides insights into evolutionary and host adaptation pathways.</title>
        <authorList>
            <person name="Thomson N.R."/>
            <person name="Clayton D.J."/>
            <person name="Windhorst D."/>
            <person name="Vernikos G."/>
            <person name="Davidson S."/>
            <person name="Churcher C."/>
            <person name="Quail M.A."/>
            <person name="Stevens M."/>
            <person name="Jones M.A."/>
            <person name="Watson M."/>
            <person name="Barron A."/>
            <person name="Layton A."/>
            <person name="Pickard D."/>
            <person name="Kingsley R.A."/>
            <person name="Bignell A."/>
            <person name="Clark L."/>
            <person name="Harris B."/>
            <person name="Ormond D."/>
            <person name="Abdellah Z."/>
            <person name="Brooks K."/>
            <person name="Cherevach I."/>
            <person name="Chillingworth T."/>
            <person name="Woodward J."/>
            <person name="Norberczak H."/>
            <person name="Lord A."/>
            <person name="Arrowsmith C."/>
            <person name="Jagels K."/>
            <person name="Moule S."/>
            <person name="Mungall K."/>
            <person name="Saunders M."/>
            <person name="Whitehead S."/>
            <person name="Chabalgoity J.A."/>
            <person name="Maskell D."/>
            <person name="Humphreys T."/>
            <person name="Roberts M."/>
            <person name="Barrow P.A."/>
            <person name="Dougan G."/>
            <person name="Parkhill J."/>
        </authorList>
    </citation>
    <scope>NUCLEOTIDE SEQUENCE [LARGE SCALE GENOMIC DNA]</scope>
    <source>
        <strain>P125109</strain>
    </source>
</reference>
<name>CYSC_SALEP</name>
<protein>
    <recommendedName>
        <fullName evidence="1">Adenylyl-sulfate kinase</fullName>
        <ecNumber evidence="1">2.7.1.25</ecNumber>
    </recommendedName>
    <alternativeName>
        <fullName evidence="1">APS kinase</fullName>
    </alternativeName>
    <alternativeName>
        <fullName evidence="1">ATP adenosine-5'-phosphosulfate 3'-phosphotransferase</fullName>
    </alternativeName>
    <alternativeName>
        <fullName evidence="1">Adenosine-5'-phosphosulfate kinase</fullName>
    </alternativeName>
</protein>
<dbReference type="EC" id="2.7.1.25" evidence="1"/>
<dbReference type="EMBL" id="AM933172">
    <property type="protein sequence ID" value="CAR34351.1"/>
    <property type="molecule type" value="Genomic_DNA"/>
</dbReference>
<dbReference type="RefSeq" id="WP_001173663.1">
    <property type="nucleotide sequence ID" value="NC_011294.1"/>
</dbReference>
<dbReference type="SMR" id="B5QW21"/>
<dbReference type="KEGG" id="set:SEN2772"/>
<dbReference type="HOGENOM" id="CLU_046932_1_0_6"/>
<dbReference type="UniPathway" id="UPA00140">
    <property type="reaction ID" value="UER00205"/>
</dbReference>
<dbReference type="Proteomes" id="UP000000613">
    <property type="component" value="Chromosome"/>
</dbReference>
<dbReference type="GO" id="GO:0004020">
    <property type="term" value="F:adenylylsulfate kinase activity"/>
    <property type="evidence" value="ECO:0007669"/>
    <property type="project" value="UniProtKB-UniRule"/>
</dbReference>
<dbReference type="GO" id="GO:0005524">
    <property type="term" value="F:ATP binding"/>
    <property type="evidence" value="ECO:0007669"/>
    <property type="project" value="UniProtKB-UniRule"/>
</dbReference>
<dbReference type="GO" id="GO:0070814">
    <property type="term" value="P:hydrogen sulfide biosynthetic process"/>
    <property type="evidence" value="ECO:0007669"/>
    <property type="project" value="UniProtKB-UniRule"/>
</dbReference>
<dbReference type="GO" id="GO:0000103">
    <property type="term" value="P:sulfate assimilation"/>
    <property type="evidence" value="ECO:0007669"/>
    <property type="project" value="UniProtKB-UniRule"/>
</dbReference>
<dbReference type="CDD" id="cd02027">
    <property type="entry name" value="APSK"/>
    <property type="match status" value="1"/>
</dbReference>
<dbReference type="FunFam" id="3.40.50.300:FF:000212">
    <property type="entry name" value="Adenylyl-sulfate kinase"/>
    <property type="match status" value="1"/>
</dbReference>
<dbReference type="Gene3D" id="3.40.50.300">
    <property type="entry name" value="P-loop containing nucleotide triphosphate hydrolases"/>
    <property type="match status" value="1"/>
</dbReference>
<dbReference type="HAMAP" id="MF_00065">
    <property type="entry name" value="Adenylyl_sulf_kinase"/>
    <property type="match status" value="1"/>
</dbReference>
<dbReference type="InterPro" id="IPR002891">
    <property type="entry name" value="APS_kinase"/>
</dbReference>
<dbReference type="InterPro" id="IPR027417">
    <property type="entry name" value="P-loop_NTPase"/>
</dbReference>
<dbReference type="NCBIfam" id="TIGR00455">
    <property type="entry name" value="apsK"/>
    <property type="match status" value="1"/>
</dbReference>
<dbReference type="NCBIfam" id="NF003013">
    <property type="entry name" value="PRK03846.1"/>
    <property type="match status" value="1"/>
</dbReference>
<dbReference type="PANTHER" id="PTHR11055:SF63">
    <property type="entry name" value="ADENYLYL-SULFATE KINASE 1, CHLOROPLASTIC"/>
    <property type="match status" value="1"/>
</dbReference>
<dbReference type="PANTHER" id="PTHR11055">
    <property type="entry name" value="BIFUNCTIONAL 3'-PHOSPHOADENOSINE 5'-PHOSPHOSULFATE SYNTHASE"/>
    <property type="match status" value="1"/>
</dbReference>
<dbReference type="Pfam" id="PF01583">
    <property type="entry name" value="APS_kinase"/>
    <property type="match status" value="1"/>
</dbReference>
<dbReference type="SUPFAM" id="SSF52540">
    <property type="entry name" value="P-loop containing nucleoside triphosphate hydrolases"/>
    <property type="match status" value="1"/>
</dbReference>
<comment type="function">
    <text evidence="1">Catalyzes the synthesis of activated sulfate.</text>
</comment>
<comment type="catalytic activity">
    <reaction evidence="1">
        <text>adenosine 5'-phosphosulfate + ATP = 3'-phosphoadenylyl sulfate + ADP + H(+)</text>
        <dbReference type="Rhea" id="RHEA:24152"/>
        <dbReference type="ChEBI" id="CHEBI:15378"/>
        <dbReference type="ChEBI" id="CHEBI:30616"/>
        <dbReference type="ChEBI" id="CHEBI:58243"/>
        <dbReference type="ChEBI" id="CHEBI:58339"/>
        <dbReference type="ChEBI" id="CHEBI:456216"/>
        <dbReference type="EC" id="2.7.1.25"/>
    </reaction>
</comment>
<comment type="pathway">
    <text evidence="1">Sulfur metabolism; hydrogen sulfide biosynthesis; sulfite from sulfate: step 2/3.</text>
</comment>
<comment type="similarity">
    <text evidence="1">Belongs to the APS kinase family.</text>
</comment>
<gene>
    <name evidence="1" type="primary">cysC</name>
    <name type="ordered locus">SEN2772</name>
</gene>
<keyword id="KW-0067">ATP-binding</keyword>
<keyword id="KW-0418">Kinase</keyword>
<keyword id="KW-0547">Nucleotide-binding</keyword>
<keyword id="KW-0597">Phosphoprotein</keyword>
<keyword id="KW-0808">Transferase</keyword>
<feature type="chain" id="PRO_1000092246" description="Adenylyl-sulfate kinase">
    <location>
        <begin position="1"/>
        <end position="201"/>
    </location>
</feature>
<feature type="active site" description="Phosphoserine intermediate" evidence="1">
    <location>
        <position position="109"/>
    </location>
</feature>
<feature type="binding site" evidence="1">
    <location>
        <begin position="35"/>
        <end position="42"/>
    </location>
    <ligand>
        <name>ATP</name>
        <dbReference type="ChEBI" id="CHEBI:30616"/>
    </ligand>
</feature>
<sequence>MALHDENVVWHSHPVTVAAREQLHGHRGVVLWFTGLSGSGKSTVAGALEEALHQRGVSTYLLDGDNVRHGLCRDLGFSDADRQENIRRVGEVASLMADAGLIVLTAFISPHRAERQLVKERVGHDRFIEIYVNTPLAICEQRDPKGLYKKARAGELRNFTGIDAIYEAPDSPQVHLNGEQLVTNLVSQLLDLLRRRDIIRS</sequence>
<accession>B5QW21</accession>
<evidence type="ECO:0000255" key="1">
    <source>
        <dbReference type="HAMAP-Rule" id="MF_00065"/>
    </source>
</evidence>